<proteinExistence type="inferred from homology"/>
<name>GUFP_PAUCH</name>
<organism>
    <name type="scientific">Paulinella chromatophora</name>
    <dbReference type="NCBI Taxonomy" id="39717"/>
    <lineage>
        <taxon>Eukaryota</taxon>
        <taxon>Sar</taxon>
        <taxon>Rhizaria</taxon>
        <taxon>Cercozoa</taxon>
        <taxon>Imbricatea</taxon>
        <taxon>Silicofilosea</taxon>
        <taxon>Euglyphida</taxon>
        <taxon>Paulinellidae</taxon>
        <taxon>Paulinella</taxon>
    </lineage>
</organism>
<comment type="function">
    <text evidence="1">Promotes protein synthesis. May act as a fidelity factor of the translation reaction, by catalyzing a one-codon backward translocation of tRNAs on improperly translocated ribosomes.</text>
</comment>
<comment type="catalytic activity">
    <reaction evidence="1">
        <text>GTP + H2O = GDP + phosphate + H(+)</text>
        <dbReference type="Rhea" id="RHEA:19669"/>
        <dbReference type="ChEBI" id="CHEBI:15377"/>
        <dbReference type="ChEBI" id="CHEBI:15378"/>
        <dbReference type="ChEBI" id="CHEBI:37565"/>
        <dbReference type="ChEBI" id="CHEBI:43474"/>
        <dbReference type="ChEBI" id="CHEBI:58189"/>
    </reaction>
</comment>
<comment type="subcellular location">
    <subcellularLocation>
        <location>Plastid</location>
        <location>Organellar chromatophore</location>
    </subcellularLocation>
</comment>
<comment type="similarity">
    <text evidence="1">Belongs to the TRAFAC class translation factor GTPase superfamily. Classic translation factor GTPase family. LepA subfamily.</text>
</comment>
<gene>
    <name evidence="1" type="primary">lepA</name>
    <name type="ordered locus">PCC_0066</name>
</gene>
<feature type="chain" id="PRO_0000402922" description="Translation factor GUF1 homolog, organellar chromatophore">
    <location>
        <begin position="1"/>
        <end position="602"/>
    </location>
</feature>
<feature type="domain" description="tr-type G">
    <location>
        <begin position="7"/>
        <end position="189"/>
    </location>
</feature>
<feature type="binding site" evidence="1">
    <location>
        <begin position="16"/>
        <end position="23"/>
    </location>
    <ligand>
        <name>GTP</name>
        <dbReference type="ChEBI" id="CHEBI:37565"/>
    </ligand>
</feature>
<feature type="binding site" evidence="1">
    <location>
        <begin position="82"/>
        <end position="86"/>
    </location>
    <ligand>
        <name>GTP</name>
        <dbReference type="ChEBI" id="CHEBI:37565"/>
    </ligand>
</feature>
<feature type="binding site" evidence="1">
    <location>
        <begin position="136"/>
        <end position="139"/>
    </location>
    <ligand>
        <name>GTP</name>
        <dbReference type="ChEBI" id="CHEBI:37565"/>
    </ligand>
</feature>
<sequence>MTDAPLSRIRNFCIIAHIDHGKSTLADRLLQDTGTVAARDMQEQFLDNMELERERGITIKLQAARMEHIANDGEAYILNLIDTPGHVDFSYEVSRSLQACEGALLVVDASQGVEAQTLANVYLALEQNLEIIPVLNKIDLPGADPERVRQEIEAIIGLDTSKAITCSAKTGIGISEILQAIVERIPPPVDAIEEPLKALIFDSYYDPYRGVIVYFRVMSGQIKTRDKILLMASKKNYELDEVGIMIPGERKVDSLHAGEVGYLAASIKSVADARVGDTITLANNPANNALPGYTEVKPVVFCGLFPTDADQYPDLREALARLQLSDAALKYEPETSSAMGFGFRCGFLGLLHMEIVQERLEREYDLDLIVTAPSVVYKVNMIDESTVMVDNPATLPGPQKRKSIEEPYVKLEIYTPNSYNGTLMELCQERRGEFIDMKYLTTDRVTLHYELPLAEVVTDFFDQMKSRTKGYASMEYNLIGYRPNDLVCLDILINNEKADPLTTIVHRDKAYNVAKGLVEKLKELIPRQQFKIPLQASIGSRVIASESISAIRKDVLAKCYGGDISRKKKLLQKQAKGKKRMKAMGKVDVPQEAFMAVLTLNK</sequence>
<evidence type="ECO:0000255" key="1">
    <source>
        <dbReference type="HAMAP-Rule" id="MF_03138"/>
    </source>
</evidence>
<keyword id="KW-0342">GTP-binding</keyword>
<keyword id="KW-0378">Hydrolase</keyword>
<keyword id="KW-0547">Nucleotide-binding</keyword>
<keyword id="KW-0994">Organellar chromatophore</keyword>
<keyword id="KW-0934">Plastid</keyword>
<keyword id="KW-0648">Protein biosynthesis</keyword>
<protein>
    <recommendedName>
        <fullName evidence="1">Translation factor GUF1 homolog, organellar chromatophore</fullName>
        <ecNumber>3.6.5.-</ecNumber>
    </recommendedName>
    <alternativeName>
        <fullName evidence="1">Elongation factor 4 homolog</fullName>
        <shortName evidence="1">EF-4</shortName>
    </alternativeName>
    <alternativeName>
        <fullName evidence="1">GTPase GUF1 homolog</fullName>
    </alternativeName>
    <alternativeName>
        <fullName evidence="1">Ribosomal back-translocase</fullName>
    </alternativeName>
</protein>
<accession>B1X3K4</accession>
<geneLocation type="organellar chromatophore"/>
<dbReference type="EC" id="3.6.5.-"/>
<dbReference type="EMBL" id="CP000815">
    <property type="protein sequence ID" value="ACB42523.1"/>
    <property type="molecule type" value="Genomic_DNA"/>
</dbReference>
<dbReference type="RefSeq" id="YP_002048733.1">
    <property type="nucleotide sequence ID" value="NC_011087.1"/>
</dbReference>
<dbReference type="SMR" id="B1X3K4"/>
<dbReference type="GeneID" id="6481284"/>
<dbReference type="GO" id="GO:0070111">
    <property type="term" value="C:organellar chromatophore"/>
    <property type="evidence" value="ECO:0007669"/>
    <property type="project" value="UniProtKB-SubCell"/>
</dbReference>
<dbReference type="GO" id="GO:0009536">
    <property type="term" value="C:plastid"/>
    <property type="evidence" value="ECO:0007669"/>
    <property type="project" value="UniProtKB-KW"/>
</dbReference>
<dbReference type="GO" id="GO:0005525">
    <property type="term" value="F:GTP binding"/>
    <property type="evidence" value="ECO:0007669"/>
    <property type="project" value="UniProtKB-UniRule"/>
</dbReference>
<dbReference type="GO" id="GO:0003924">
    <property type="term" value="F:GTPase activity"/>
    <property type="evidence" value="ECO:0007669"/>
    <property type="project" value="UniProtKB-UniRule"/>
</dbReference>
<dbReference type="GO" id="GO:0043022">
    <property type="term" value="F:ribosome binding"/>
    <property type="evidence" value="ECO:0007669"/>
    <property type="project" value="TreeGrafter"/>
</dbReference>
<dbReference type="GO" id="GO:0045727">
    <property type="term" value="P:positive regulation of translation"/>
    <property type="evidence" value="ECO:0007669"/>
    <property type="project" value="UniProtKB-UniRule"/>
</dbReference>
<dbReference type="GO" id="GO:0006412">
    <property type="term" value="P:translation"/>
    <property type="evidence" value="ECO:0007669"/>
    <property type="project" value="UniProtKB-KW"/>
</dbReference>
<dbReference type="CDD" id="cd03699">
    <property type="entry name" value="EF4_II"/>
    <property type="match status" value="1"/>
</dbReference>
<dbReference type="CDD" id="cd16260">
    <property type="entry name" value="EF4_III"/>
    <property type="match status" value="1"/>
</dbReference>
<dbReference type="CDD" id="cd01890">
    <property type="entry name" value="LepA"/>
    <property type="match status" value="1"/>
</dbReference>
<dbReference type="CDD" id="cd03709">
    <property type="entry name" value="lepA_C"/>
    <property type="match status" value="1"/>
</dbReference>
<dbReference type="FunFam" id="3.40.50.300:FF:000078">
    <property type="entry name" value="Elongation factor 4"/>
    <property type="match status" value="1"/>
</dbReference>
<dbReference type="FunFam" id="2.40.30.10:FF:000015">
    <property type="entry name" value="Translation factor GUF1, mitochondrial"/>
    <property type="match status" value="1"/>
</dbReference>
<dbReference type="FunFam" id="3.30.70.240:FF:000007">
    <property type="entry name" value="Translation factor GUF1, mitochondrial"/>
    <property type="match status" value="1"/>
</dbReference>
<dbReference type="FunFam" id="3.30.70.2570:FF:000001">
    <property type="entry name" value="Translation factor GUF1, mitochondrial"/>
    <property type="match status" value="1"/>
</dbReference>
<dbReference type="FunFam" id="3.30.70.870:FF:000004">
    <property type="entry name" value="Translation factor GUF1, mitochondrial"/>
    <property type="match status" value="1"/>
</dbReference>
<dbReference type="Gene3D" id="3.30.70.240">
    <property type="match status" value="1"/>
</dbReference>
<dbReference type="Gene3D" id="3.30.70.2570">
    <property type="entry name" value="Elongation factor 4, C-terminal domain"/>
    <property type="match status" value="1"/>
</dbReference>
<dbReference type="Gene3D" id="3.30.70.870">
    <property type="entry name" value="Elongation Factor G (Translational Gtpase), domain 3"/>
    <property type="match status" value="1"/>
</dbReference>
<dbReference type="Gene3D" id="3.40.50.300">
    <property type="entry name" value="P-loop containing nucleotide triphosphate hydrolases"/>
    <property type="match status" value="1"/>
</dbReference>
<dbReference type="Gene3D" id="2.40.30.10">
    <property type="entry name" value="Translation factors"/>
    <property type="match status" value="1"/>
</dbReference>
<dbReference type="HAMAP" id="MF_03138">
    <property type="entry name" value="GUFP"/>
    <property type="match status" value="1"/>
</dbReference>
<dbReference type="HAMAP" id="MF_00071">
    <property type="entry name" value="LepA"/>
    <property type="match status" value="1"/>
</dbReference>
<dbReference type="InterPro" id="IPR006297">
    <property type="entry name" value="EF-4"/>
</dbReference>
<dbReference type="InterPro" id="IPR035647">
    <property type="entry name" value="EFG_III/V"/>
</dbReference>
<dbReference type="InterPro" id="IPR000640">
    <property type="entry name" value="EFG_V-like"/>
</dbReference>
<dbReference type="InterPro" id="IPR004161">
    <property type="entry name" value="EFTu-like_2"/>
</dbReference>
<dbReference type="InterPro" id="IPR031157">
    <property type="entry name" value="G_TR_CS"/>
</dbReference>
<dbReference type="InterPro" id="IPR027518">
    <property type="entry name" value="GUFP"/>
</dbReference>
<dbReference type="InterPro" id="IPR038363">
    <property type="entry name" value="LepA_C_sf"/>
</dbReference>
<dbReference type="InterPro" id="IPR013842">
    <property type="entry name" value="LepA_CTD"/>
</dbReference>
<dbReference type="InterPro" id="IPR035654">
    <property type="entry name" value="LepA_IV"/>
</dbReference>
<dbReference type="InterPro" id="IPR027417">
    <property type="entry name" value="P-loop_NTPase"/>
</dbReference>
<dbReference type="InterPro" id="IPR005225">
    <property type="entry name" value="Small_GTP-bd"/>
</dbReference>
<dbReference type="InterPro" id="IPR000795">
    <property type="entry name" value="T_Tr_GTP-bd_dom"/>
</dbReference>
<dbReference type="InterPro" id="IPR009000">
    <property type="entry name" value="Transl_B-barrel_sf"/>
</dbReference>
<dbReference type="NCBIfam" id="TIGR01393">
    <property type="entry name" value="lepA"/>
    <property type="match status" value="1"/>
</dbReference>
<dbReference type="NCBIfam" id="TIGR00231">
    <property type="entry name" value="small_GTP"/>
    <property type="match status" value="1"/>
</dbReference>
<dbReference type="PANTHER" id="PTHR43512:SF4">
    <property type="entry name" value="TRANSLATION FACTOR GUF1 HOMOLOG, CHLOROPLASTIC"/>
    <property type="match status" value="1"/>
</dbReference>
<dbReference type="PANTHER" id="PTHR43512">
    <property type="entry name" value="TRANSLATION FACTOR GUF1-RELATED"/>
    <property type="match status" value="1"/>
</dbReference>
<dbReference type="Pfam" id="PF00679">
    <property type="entry name" value="EFG_C"/>
    <property type="match status" value="1"/>
</dbReference>
<dbReference type="Pfam" id="PF00009">
    <property type="entry name" value="GTP_EFTU"/>
    <property type="match status" value="1"/>
</dbReference>
<dbReference type="Pfam" id="PF03144">
    <property type="entry name" value="GTP_EFTU_D2"/>
    <property type="match status" value="1"/>
</dbReference>
<dbReference type="Pfam" id="PF06421">
    <property type="entry name" value="LepA_C"/>
    <property type="match status" value="1"/>
</dbReference>
<dbReference type="PRINTS" id="PR00315">
    <property type="entry name" value="ELONGATNFCT"/>
</dbReference>
<dbReference type="SMART" id="SM00838">
    <property type="entry name" value="EFG_C"/>
    <property type="match status" value="1"/>
</dbReference>
<dbReference type="SUPFAM" id="SSF54980">
    <property type="entry name" value="EF-G C-terminal domain-like"/>
    <property type="match status" value="2"/>
</dbReference>
<dbReference type="SUPFAM" id="SSF52540">
    <property type="entry name" value="P-loop containing nucleoside triphosphate hydrolases"/>
    <property type="match status" value="1"/>
</dbReference>
<dbReference type="SUPFAM" id="SSF50447">
    <property type="entry name" value="Translation proteins"/>
    <property type="match status" value="1"/>
</dbReference>
<dbReference type="PROSITE" id="PS00301">
    <property type="entry name" value="G_TR_1"/>
    <property type="match status" value="1"/>
</dbReference>
<dbReference type="PROSITE" id="PS51722">
    <property type="entry name" value="G_TR_2"/>
    <property type="match status" value="1"/>
</dbReference>
<reference key="1">
    <citation type="journal article" date="2008" name="Curr. Biol.">
        <title>Chromatophore genome sequence of Paulinella sheds light on acquisition of photosynthesis by eukaryotes.</title>
        <authorList>
            <person name="Nowack E.C.M."/>
            <person name="Melkonian M."/>
            <person name="Gloeckner G."/>
        </authorList>
    </citation>
    <scope>NUCLEOTIDE SEQUENCE [LARGE SCALE GENOMIC DNA]</scope>
</reference>